<dbReference type="EC" id="3.6.1.66" evidence="1"/>
<dbReference type="EMBL" id="AE008923">
    <property type="protein sequence ID" value="AAM38242.1"/>
    <property type="status" value="ALT_INIT"/>
    <property type="molecule type" value="Genomic_DNA"/>
</dbReference>
<dbReference type="SMR" id="Q8PH61"/>
<dbReference type="KEGG" id="xac:XAC3399"/>
<dbReference type="eggNOG" id="COG0127">
    <property type="taxonomic scope" value="Bacteria"/>
</dbReference>
<dbReference type="HOGENOM" id="CLU_082080_0_3_6"/>
<dbReference type="Proteomes" id="UP000000576">
    <property type="component" value="Chromosome"/>
</dbReference>
<dbReference type="GO" id="GO:0005829">
    <property type="term" value="C:cytosol"/>
    <property type="evidence" value="ECO:0007669"/>
    <property type="project" value="TreeGrafter"/>
</dbReference>
<dbReference type="GO" id="GO:0035870">
    <property type="term" value="F:dITP diphosphatase activity"/>
    <property type="evidence" value="ECO:0007669"/>
    <property type="project" value="RHEA"/>
</dbReference>
<dbReference type="GO" id="GO:0036220">
    <property type="term" value="F:ITP diphosphatase activity"/>
    <property type="evidence" value="ECO:0007669"/>
    <property type="project" value="UniProtKB-EC"/>
</dbReference>
<dbReference type="GO" id="GO:0046872">
    <property type="term" value="F:metal ion binding"/>
    <property type="evidence" value="ECO:0007669"/>
    <property type="project" value="UniProtKB-KW"/>
</dbReference>
<dbReference type="GO" id="GO:0000166">
    <property type="term" value="F:nucleotide binding"/>
    <property type="evidence" value="ECO:0007669"/>
    <property type="project" value="UniProtKB-KW"/>
</dbReference>
<dbReference type="GO" id="GO:0017111">
    <property type="term" value="F:ribonucleoside triphosphate phosphatase activity"/>
    <property type="evidence" value="ECO:0007669"/>
    <property type="project" value="InterPro"/>
</dbReference>
<dbReference type="GO" id="GO:0036222">
    <property type="term" value="F:XTP diphosphatase activity"/>
    <property type="evidence" value="ECO:0007669"/>
    <property type="project" value="RHEA"/>
</dbReference>
<dbReference type="GO" id="GO:0009117">
    <property type="term" value="P:nucleotide metabolic process"/>
    <property type="evidence" value="ECO:0007669"/>
    <property type="project" value="UniProtKB-KW"/>
</dbReference>
<dbReference type="GO" id="GO:0009146">
    <property type="term" value="P:purine nucleoside triphosphate catabolic process"/>
    <property type="evidence" value="ECO:0007669"/>
    <property type="project" value="UniProtKB-UniRule"/>
</dbReference>
<dbReference type="CDD" id="cd00515">
    <property type="entry name" value="HAM1"/>
    <property type="match status" value="1"/>
</dbReference>
<dbReference type="FunFam" id="3.90.950.10:FF:000001">
    <property type="entry name" value="dITP/XTP pyrophosphatase"/>
    <property type="match status" value="1"/>
</dbReference>
<dbReference type="Gene3D" id="3.90.950.10">
    <property type="match status" value="1"/>
</dbReference>
<dbReference type="HAMAP" id="MF_01405">
    <property type="entry name" value="Non_canon_purine_NTPase"/>
    <property type="match status" value="1"/>
</dbReference>
<dbReference type="InterPro" id="IPR020922">
    <property type="entry name" value="dITP/XTP_pyrophosphatase"/>
</dbReference>
<dbReference type="InterPro" id="IPR029001">
    <property type="entry name" value="ITPase-like_fam"/>
</dbReference>
<dbReference type="InterPro" id="IPR002637">
    <property type="entry name" value="RdgB/HAM1"/>
</dbReference>
<dbReference type="NCBIfam" id="TIGR00042">
    <property type="entry name" value="RdgB/HAM1 family non-canonical purine NTP pyrophosphatase"/>
    <property type="match status" value="1"/>
</dbReference>
<dbReference type="PANTHER" id="PTHR11067:SF9">
    <property type="entry name" value="INOSINE TRIPHOSPHATE PYROPHOSPHATASE"/>
    <property type="match status" value="1"/>
</dbReference>
<dbReference type="PANTHER" id="PTHR11067">
    <property type="entry name" value="INOSINE TRIPHOSPHATE PYROPHOSPHATASE/HAM1 PROTEIN"/>
    <property type="match status" value="1"/>
</dbReference>
<dbReference type="Pfam" id="PF01725">
    <property type="entry name" value="Ham1p_like"/>
    <property type="match status" value="1"/>
</dbReference>
<dbReference type="SUPFAM" id="SSF52972">
    <property type="entry name" value="ITPase-like"/>
    <property type="match status" value="1"/>
</dbReference>
<accession>Q8PH61</accession>
<name>IXTPA_XANAC</name>
<keyword id="KW-0378">Hydrolase</keyword>
<keyword id="KW-0460">Magnesium</keyword>
<keyword id="KW-0479">Metal-binding</keyword>
<keyword id="KW-0546">Nucleotide metabolism</keyword>
<keyword id="KW-0547">Nucleotide-binding</keyword>
<feature type="chain" id="PRO_0000178266" description="dITP/XTP pyrophosphatase">
    <location>
        <begin position="1"/>
        <end position="199"/>
    </location>
</feature>
<feature type="active site" description="Proton acceptor" evidence="1">
    <location>
        <position position="69"/>
    </location>
</feature>
<feature type="binding site" evidence="1">
    <location>
        <begin position="8"/>
        <end position="13"/>
    </location>
    <ligand>
        <name>substrate</name>
    </ligand>
</feature>
<feature type="binding site" evidence="1">
    <location>
        <position position="69"/>
    </location>
    <ligand>
        <name>Mg(2+)</name>
        <dbReference type="ChEBI" id="CHEBI:18420"/>
    </ligand>
</feature>
<feature type="binding site" evidence="1">
    <location>
        <position position="70"/>
    </location>
    <ligand>
        <name>substrate</name>
    </ligand>
</feature>
<feature type="binding site" evidence="1">
    <location>
        <begin position="154"/>
        <end position="157"/>
    </location>
    <ligand>
        <name>substrate</name>
    </ligand>
</feature>
<feature type="binding site" evidence="1">
    <location>
        <position position="177"/>
    </location>
    <ligand>
        <name>substrate</name>
    </ligand>
</feature>
<feature type="binding site" evidence="1">
    <location>
        <begin position="182"/>
        <end position="183"/>
    </location>
    <ligand>
        <name>substrate</name>
    </ligand>
</feature>
<proteinExistence type="inferred from homology"/>
<gene>
    <name type="ordered locus">XAC3399</name>
</gene>
<comment type="function">
    <text evidence="1">Pyrophosphatase that catalyzes the hydrolysis of nucleoside triphosphates to their monophosphate derivatives, with a high preference for the non-canonical purine nucleotides XTP (xanthosine triphosphate), dITP (deoxyinosine triphosphate) and ITP. Seems to function as a house-cleaning enzyme that removes non-canonical purine nucleotides from the nucleotide pool, thus preventing their incorporation into DNA/RNA and avoiding chromosomal lesions.</text>
</comment>
<comment type="catalytic activity">
    <reaction evidence="1">
        <text>XTP + H2O = XMP + diphosphate + H(+)</text>
        <dbReference type="Rhea" id="RHEA:28610"/>
        <dbReference type="ChEBI" id="CHEBI:15377"/>
        <dbReference type="ChEBI" id="CHEBI:15378"/>
        <dbReference type="ChEBI" id="CHEBI:33019"/>
        <dbReference type="ChEBI" id="CHEBI:57464"/>
        <dbReference type="ChEBI" id="CHEBI:61314"/>
        <dbReference type="EC" id="3.6.1.66"/>
    </reaction>
</comment>
<comment type="catalytic activity">
    <reaction evidence="1">
        <text>dITP + H2O = dIMP + diphosphate + H(+)</text>
        <dbReference type="Rhea" id="RHEA:28342"/>
        <dbReference type="ChEBI" id="CHEBI:15377"/>
        <dbReference type="ChEBI" id="CHEBI:15378"/>
        <dbReference type="ChEBI" id="CHEBI:33019"/>
        <dbReference type="ChEBI" id="CHEBI:61194"/>
        <dbReference type="ChEBI" id="CHEBI:61382"/>
        <dbReference type="EC" id="3.6.1.66"/>
    </reaction>
</comment>
<comment type="catalytic activity">
    <reaction evidence="1">
        <text>ITP + H2O = IMP + diphosphate + H(+)</text>
        <dbReference type="Rhea" id="RHEA:29399"/>
        <dbReference type="ChEBI" id="CHEBI:15377"/>
        <dbReference type="ChEBI" id="CHEBI:15378"/>
        <dbReference type="ChEBI" id="CHEBI:33019"/>
        <dbReference type="ChEBI" id="CHEBI:58053"/>
        <dbReference type="ChEBI" id="CHEBI:61402"/>
        <dbReference type="EC" id="3.6.1.66"/>
    </reaction>
</comment>
<comment type="cofactor">
    <cofactor evidence="1">
        <name>Mg(2+)</name>
        <dbReference type="ChEBI" id="CHEBI:18420"/>
    </cofactor>
    <text evidence="1">Binds 1 Mg(2+) ion per subunit.</text>
</comment>
<comment type="subunit">
    <text evidence="1">Homodimer.</text>
</comment>
<comment type="similarity">
    <text evidence="1">Belongs to the HAM1 NTPase family.</text>
</comment>
<comment type="sequence caution" evidence="2">
    <conflict type="erroneous initiation">
        <sequence resource="EMBL-CDS" id="AAM38242"/>
    </conflict>
    <text>Extended N-terminus.</text>
</comment>
<protein>
    <recommendedName>
        <fullName evidence="1">dITP/XTP pyrophosphatase</fullName>
        <ecNumber evidence="1">3.6.1.66</ecNumber>
    </recommendedName>
    <alternativeName>
        <fullName evidence="1">Non-canonical purine NTP pyrophosphatase</fullName>
    </alternativeName>
    <alternativeName>
        <fullName evidence="1">Non-standard purine NTP pyrophosphatase</fullName>
    </alternativeName>
    <alternativeName>
        <fullName evidence="1">Nucleoside-triphosphate diphosphatase</fullName>
    </alternativeName>
    <alternativeName>
        <fullName evidence="1">Nucleoside-triphosphate pyrophosphatase</fullName>
        <shortName evidence="1">NTPase</shortName>
    </alternativeName>
</protein>
<reference key="1">
    <citation type="journal article" date="2002" name="Nature">
        <title>Comparison of the genomes of two Xanthomonas pathogens with differing host specificities.</title>
        <authorList>
            <person name="da Silva A.C.R."/>
            <person name="Ferro J.A."/>
            <person name="Reinach F.C."/>
            <person name="Farah C.S."/>
            <person name="Furlan L.R."/>
            <person name="Quaggio R.B."/>
            <person name="Monteiro-Vitorello C.B."/>
            <person name="Van Sluys M.A."/>
            <person name="Almeida N.F. Jr."/>
            <person name="Alves L.M.C."/>
            <person name="do Amaral A.M."/>
            <person name="Bertolini M.C."/>
            <person name="Camargo L.E.A."/>
            <person name="Camarotte G."/>
            <person name="Cannavan F."/>
            <person name="Cardozo J."/>
            <person name="Chambergo F."/>
            <person name="Ciapina L.P."/>
            <person name="Cicarelli R.M.B."/>
            <person name="Coutinho L.L."/>
            <person name="Cursino-Santos J.R."/>
            <person name="El-Dorry H."/>
            <person name="Faria J.B."/>
            <person name="Ferreira A.J.S."/>
            <person name="Ferreira R.C.C."/>
            <person name="Ferro M.I.T."/>
            <person name="Formighieri E.F."/>
            <person name="Franco M.C."/>
            <person name="Greggio C.C."/>
            <person name="Gruber A."/>
            <person name="Katsuyama A.M."/>
            <person name="Kishi L.T."/>
            <person name="Leite R.P."/>
            <person name="Lemos E.G.M."/>
            <person name="Lemos M.V.F."/>
            <person name="Locali E.C."/>
            <person name="Machado M.A."/>
            <person name="Madeira A.M.B.N."/>
            <person name="Martinez-Rossi N.M."/>
            <person name="Martins E.C."/>
            <person name="Meidanis J."/>
            <person name="Menck C.F.M."/>
            <person name="Miyaki C.Y."/>
            <person name="Moon D.H."/>
            <person name="Moreira L.M."/>
            <person name="Novo M.T.M."/>
            <person name="Okura V.K."/>
            <person name="Oliveira M.C."/>
            <person name="Oliveira V.R."/>
            <person name="Pereira H.A."/>
            <person name="Rossi A."/>
            <person name="Sena J.A.D."/>
            <person name="Silva C."/>
            <person name="de Souza R.F."/>
            <person name="Spinola L.A.F."/>
            <person name="Takita M.A."/>
            <person name="Tamura R.E."/>
            <person name="Teixeira E.C."/>
            <person name="Tezza R.I.D."/>
            <person name="Trindade dos Santos M."/>
            <person name="Truffi D."/>
            <person name="Tsai S.M."/>
            <person name="White F.F."/>
            <person name="Setubal J.C."/>
            <person name="Kitajima J.P."/>
        </authorList>
    </citation>
    <scope>NUCLEOTIDE SEQUENCE [LARGE SCALE GENOMIC DNA]</scope>
    <source>
        <strain>306</strain>
    </source>
</reference>
<organism>
    <name type="scientific">Xanthomonas axonopodis pv. citri (strain 306)</name>
    <dbReference type="NCBI Taxonomy" id="190486"/>
    <lineage>
        <taxon>Bacteria</taxon>
        <taxon>Pseudomonadati</taxon>
        <taxon>Pseudomonadota</taxon>
        <taxon>Gammaproteobacteria</taxon>
        <taxon>Lysobacterales</taxon>
        <taxon>Lysobacteraceae</taxon>
        <taxon>Xanthomonas</taxon>
    </lineage>
</organism>
<sequence length="199" mass="21088">MKQLVLASGNAGKLEELRAMLAGLPLRVVAQGELGVEDVPETGLTFVENALIKARHASAVTGLPALADDSGLIVDALDGAPGLYSARYAGSPTNALANNAKLLDAMREVPSDRRSARFYAVIVLLRHPEDPQPLIAEGSWEGVITTQPRGDGGFGYNPVFLDPVYGLTAAEMDTALKNRLSHRAVALATLQHKLHAMSL</sequence>
<evidence type="ECO:0000255" key="1">
    <source>
        <dbReference type="HAMAP-Rule" id="MF_01405"/>
    </source>
</evidence>
<evidence type="ECO:0000305" key="2"/>